<gene>
    <name type="ordered locus">YDR524W-C</name>
    <name type="ORF">YDR524W-A</name>
</gene>
<feature type="chain" id="PRO_0000253882" description="Uncharacterized protein YDR524W-C">
    <location>
        <begin position="1"/>
        <end position="29"/>
    </location>
</feature>
<organism>
    <name type="scientific">Saccharomyces cerevisiae (strain ATCC 204508 / S288c)</name>
    <name type="common">Baker's yeast</name>
    <dbReference type="NCBI Taxonomy" id="559292"/>
    <lineage>
        <taxon>Eukaryota</taxon>
        <taxon>Fungi</taxon>
        <taxon>Dikarya</taxon>
        <taxon>Ascomycota</taxon>
        <taxon>Saccharomycotina</taxon>
        <taxon>Saccharomycetes</taxon>
        <taxon>Saccharomycetales</taxon>
        <taxon>Saccharomycetaceae</taxon>
        <taxon>Saccharomyces</taxon>
    </lineage>
</organism>
<keyword id="KW-1185">Reference proteome</keyword>
<protein>
    <recommendedName>
        <fullName>Uncharacterized protein YDR524W-C</fullName>
    </recommendedName>
</protein>
<accession>P0C1Z1</accession>
<accession>D6VTE5</accession>
<dbReference type="EMBL" id="U33057">
    <property type="status" value="NOT_ANNOTATED_CDS"/>
    <property type="molecule type" value="Genomic_DNA"/>
</dbReference>
<dbReference type="EMBL" id="BK006938">
    <property type="protein sequence ID" value="DAA12355.1"/>
    <property type="molecule type" value="Genomic_DNA"/>
</dbReference>
<dbReference type="BioGRID" id="36979">
    <property type="interactions" value="28"/>
</dbReference>
<dbReference type="FunCoup" id="P0C1Z1">
    <property type="interactions" value="22"/>
</dbReference>
<dbReference type="STRING" id="4932.YDR524W-C"/>
<dbReference type="PaxDb" id="4932-YDR524W-C"/>
<dbReference type="EnsemblFungi" id="YDR524W-C_mRNA">
    <property type="protein sequence ID" value="YDR524W-C"/>
    <property type="gene ID" value="YDR524W-C"/>
</dbReference>
<dbReference type="GeneID" id="1466437"/>
<dbReference type="KEGG" id="sce:YDR524W-C"/>
<dbReference type="AGR" id="SGD:S000028740"/>
<dbReference type="SGD" id="S000028740">
    <property type="gene designation" value="YDR524W-C"/>
</dbReference>
<dbReference type="VEuPathDB" id="FungiDB:YDR524W-C"/>
<dbReference type="HOGENOM" id="CLU_3410760_0_0_1"/>
<dbReference type="InParanoid" id="P0C1Z1"/>
<dbReference type="BioCyc" id="YEAST:G3O-30121-MONOMER"/>
<dbReference type="ChiTaRS" id="YDR524W-C">
    <property type="organism name" value="yeast"/>
</dbReference>
<dbReference type="PRO" id="PR:P0C1Z1"/>
<dbReference type="Proteomes" id="UP000002311">
    <property type="component" value="Chromosome IV"/>
</dbReference>
<proteinExistence type="predicted"/>
<reference key="1">
    <citation type="journal article" date="1997" name="Nature">
        <title>The nucleotide sequence of Saccharomyces cerevisiae chromosome IV.</title>
        <authorList>
            <person name="Jacq C."/>
            <person name="Alt-Moerbe J."/>
            <person name="Andre B."/>
            <person name="Arnold W."/>
            <person name="Bahr A."/>
            <person name="Ballesta J.P.G."/>
            <person name="Bargues M."/>
            <person name="Baron L."/>
            <person name="Becker A."/>
            <person name="Biteau N."/>
            <person name="Bloecker H."/>
            <person name="Blugeon C."/>
            <person name="Boskovic J."/>
            <person name="Brandt P."/>
            <person name="Brueckner M."/>
            <person name="Buitrago M.J."/>
            <person name="Coster F."/>
            <person name="Delaveau T."/>
            <person name="del Rey F."/>
            <person name="Dujon B."/>
            <person name="Eide L.G."/>
            <person name="Garcia-Cantalejo J.M."/>
            <person name="Goffeau A."/>
            <person name="Gomez-Peris A."/>
            <person name="Granotier C."/>
            <person name="Hanemann V."/>
            <person name="Hankeln T."/>
            <person name="Hoheisel J.D."/>
            <person name="Jaeger W."/>
            <person name="Jimenez A."/>
            <person name="Jonniaux J.-L."/>
            <person name="Kraemer C."/>
            <person name="Kuester H."/>
            <person name="Laamanen P."/>
            <person name="Legros Y."/>
            <person name="Louis E.J."/>
            <person name="Moeller-Rieker S."/>
            <person name="Monnet A."/>
            <person name="Moro M."/>
            <person name="Mueller-Auer S."/>
            <person name="Nussbaumer B."/>
            <person name="Paricio N."/>
            <person name="Paulin L."/>
            <person name="Perea J."/>
            <person name="Perez-Alonso M."/>
            <person name="Perez-Ortin J.E."/>
            <person name="Pohl T.M."/>
            <person name="Prydz H."/>
            <person name="Purnelle B."/>
            <person name="Rasmussen S.W."/>
            <person name="Remacha M.A."/>
            <person name="Revuelta J.L."/>
            <person name="Rieger M."/>
            <person name="Salom D."/>
            <person name="Saluz H.P."/>
            <person name="Saiz J.E."/>
            <person name="Saren A.-M."/>
            <person name="Schaefer M."/>
            <person name="Scharfe M."/>
            <person name="Schmidt E.R."/>
            <person name="Schneider C."/>
            <person name="Scholler P."/>
            <person name="Schwarz S."/>
            <person name="Soler-Mira A."/>
            <person name="Urrestarazu L.A."/>
            <person name="Verhasselt P."/>
            <person name="Vissers S."/>
            <person name="Voet M."/>
            <person name="Volckaert G."/>
            <person name="Wagner G."/>
            <person name="Wambutt R."/>
            <person name="Wedler E."/>
            <person name="Wedler H."/>
            <person name="Woelfl S."/>
            <person name="Harris D.E."/>
            <person name="Bowman S."/>
            <person name="Brown D."/>
            <person name="Churcher C.M."/>
            <person name="Connor R."/>
            <person name="Dedman K."/>
            <person name="Gentles S."/>
            <person name="Hamlin N."/>
            <person name="Hunt S."/>
            <person name="Jones L."/>
            <person name="McDonald S."/>
            <person name="Murphy L.D."/>
            <person name="Niblett D."/>
            <person name="Odell C."/>
            <person name="Oliver K."/>
            <person name="Rajandream M.A."/>
            <person name="Richards C."/>
            <person name="Shore L."/>
            <person name="Walsh S.V."/>
            <person name="Barrell B.G."/>
            <person name="Dietrich F.S."/>
            <person name="Mulligan J.T."/>
            <person name="Allen E."/>
            <person name="Araujo R."/>
            <person name="Aviles E."/>
            <person name="Berno A."/>
            <person name="Carpenter J."/>
            <person name="Chen E."/>
            <person name="Cherry J.M."/>
            <person name="Chung E."/>
            <person name="Duncan M."/>
            <person name="Hunicke-Smith S."/>
            <person name="Hyman R.W."/>
            <person name="Komp C."/>
            <person name="Lashkari D."/>
            <person name="Lew H."/>
            <person name="Lin D."/>
            <person name="Mosedale D."/>
            <person name="Nakahara K."/>
            <person name="Namath A."/>
            <person name="Oefner P."/>
            <person name="Oh C."/>
            <person name="Petel F.X."/>
            <person name="Roberts D."/>
            <person name="Schramm S."/>
            <person name="Schroeder M."/>
            <person name="Shogren T."/>
            <person name="Shroff N."/>
            <person name="Winant A."/>
            <person name="Yelton M.A."/>
            <person name="Botstein D."/>
            <person name="Davis R.W."/>
            <person name="Johnston M."/>
            <person name="Andrews S."/>
            <person name="Brinkman R."/>
            <person name="Cooper J."/>
            <person name="Ding H."/>
            <person name="Du Z."/>
            <person name="Favello A."/>
            <person name="Fulton L."/>
            <person name="Gattung S."/>
            <person name="Greco T."/>
            <person name="Hallsworth K."/>
            <person name="Hawkins J."/>
            <person name="Hillier L.W."/>
            <person name="Jier M."/>
            <person name="Johnson D."/>
            <person name="Johnston L."/>
            <person name="Kirsten J."/>
            <person name="Kucaba T."/>
            <person name="Langston Y."/>
            <person name="Latreille P."/>
            <person name="Le T."/>
            <person name="Mardis E."/>
            <person name="Menezes S."/>
            <person name="Miller N."/>
            <person name="Nhan M."/>
            <person name="Pauley A."/>
            <person name="Peluso D."/>
            <person name="Rifkin L."/>
            <person name="Riles L."/>
            <person name="Taich A."/>
            <person name="Trevaskis E."/>
            <person name="Vignati D."/>
            <person name="Wilcox L."/>
            <person name="Wohldman P."/>
            <person name="Vaudin M."/>
            <person name="Wilson R."/>
            <person name="Waterston R."/>
            <person name="Albermann K."/>
            <person name="Hani J."/>
            <person name="Heumann K."/>
            <person name="Kleine K."/>
            <person name="Mewes H.-W."/>
            <person name="Zollner A."/>
            <person name="Zaccaria P."/>
        </authorList>
    </citation>
    <scope>NUCLEOTIDE SEQUENCE [LARGE SCALE GENOMIC DNA]</scope>
    <source>
        <strain>ATCC 204508 / S288c</strain>
    </source>
</reference>
<reference key="2">
    <citation type="journal article" date="2014" name="G3 (Bethesda)">
        <title>The reference genome sequence of Saccharomyces cerevisiae: Then and now.</title>
        <authorList>
            <person name="Engel S.R."/>
            <person name="Dietrich F.S."/>
            <person name="Fisk D.G."/>
            <person name="Binkley G."/>
            <person name="Balakrishnan R."/>
            <person name="Costanzo M.C."/>
            <person name="Dwight S.S."/>
            <person name="Hitz B.C."/>
            <person name="Karra K."/>
            <person name="Nash R.S."/>
            <person name="Weng S."/>
            <person name="Wong E.D."/>
            <person name="Lloyd P."/>
            <person name="Skrzypek M.S."/>
            <person name="Miyasato S.R."/>
            <person name="Simison M."/>
            <person name="Cherry J.M."/>
        </authorList>
    </citation>
    <scope>GENOME REANNOTATION</scope>
    <source>
        <strain>ATCC 204508 / S288c</strain>
    </source>
</reference>
<reference key="3">
    <citation type="journal article" date="2006" name="Genome Res.">
        <title>Functional genomics of genes with small open reading frames (sORFs) in S. cerevisiae.</title>
        <authorList>
            <person name="Kastenmayer J.P."/>
            <person name="Ni L."/>
            <person name="Chu A."/>
            <person name="Kitchen L.E."/>
            <person name="Au W.-C."/>
            <person name="Yang H."/>
            <person name="Carter C.D."/>
            <person name="Wheeler D."/>
            <person name="Davis R.W."/>
            <person name="Boeke J.D."/>
            <person name="Snyder M.A."/>
            <person name="Basrai M.A."/>
        </authorList>
    </citation>
    <scope>PROTEIN EXPRESSION</scope>
</reference>
<name>YD24C_YEAST</name>
<sequence>MKRSYKTLPTYFFSFFGPFKERAVFLLVL</sequence>